<name>GMHA_METCA</name>
<accession>Q60CC5</accession>
<dbReference type="EC" id="5.3.1.28" evidence="1"/>
<dbReference type="EMBL" id="AE017282">
    <property type="protein sequence ID" value="AAU90548.2"/>
    <property type="molecule type" value="Genomic_DNA"/>
</dbReference>
<dbReference type="RefSeq" id="WP_010959551.1">
    <property type="nucleotide sequence ID" value="NC_002977.6"/>
</dbReference>
<dbReference type="SMR" id="Q60CC5"/>
<dbReference type="STRING" id="243233.MCA0183"/>
<dbReference type="GeneID" id="88222531"/>
<dbReference type="KEGG" id="mca:MCA0183"/>
<dbReference type="eggNOG" id="COG0279">
    <property type="taxonomic scope" value="Bacteria"/>
</dbReference>
<dbReference type="HOGENOM" id="CLU_080999_3_1_6"/>
<dbReference type="UniPathway" id="UPA00041">
    <property type="reaction ID" value="UER00436"/>
</dbReference>
<dbReference type="Proteomes" id="UP000006821">
    <property type="component" value="Chromosome"/>
</dbReference>
<dbReference type="GO" id="GO:0005737">
    <property type="term" value="C:cytoplasm"/>
    <property type="evidence" value="ECO:0007669"/>
    <property type="project" value="UniProtKB-SubCell"/>
</dbReference>
<dbReference type="GO" id="GO:0097367">
    <property type="term" value="F:carbohydrate derivative binding"/>
    <property type="evidence" value="ECO:0007669"/>
    <property type="project" value="InterPro"/>
</dbReference>
<dbReference type="GO" id="GO:0008968">
    <property type="term" value="F:D-sedoheptulose 7-phosphate isomerase activity"/>
    <property type="evidence" value="ECO:0007669"/>
    <property type="project" value="UniProtKB-UniRule"/>
</dbReference>
<dbReference type="GO" id="GO:0008270">
    <property type="term" value="F:zinc ion binding"/>
    <property type="evidence" value="ECO:0007669"/>
    <property type="project" value="UniProtKB-UniRule"/>
</dbReference>
<dbReference type="GO" id="GO:0005975">
    <property type="term" value="P:carbohydrate metabolic process"/>
    <property type="evidence" value="ECO:0007669"/>
    <property type="project" value="UniProtKB-UniRule"/>
</dbReference>
<dbReference type="GO" id="GO:2001061">
    <property type="term" value="P:D-glycero-D-manno-heptose 7-phosphate biosynthetic process"/>
    <property type="evidence" value="ECO:0007669"/>
    <property type="project" value="UniProtKB-UniPathway"/>
</dbReference>
<dbReference type="CDD" id="cd05006">
    <property type="entry name" value="SIS_GmhA"/>
    <property type="match status" value="1"/>
</dbReference>
<dbReference type="Gene3D" id="3.40.50.10490">
    <property type="entry name" value="Glucose-6-phosphate isomerase like protein, domain 1"/>
    <property type="match status" value="1"/>
</dbReference>
<dbReference type="HAMAP" id="MF_00067">
    <property type="entry name" value="GmhA"/>
    <property type="match status" value="1"/>
</dbReference>
<dbReference type="InterPro" id="IPR035461">
    <property type="entry name" value="GmhA/DiaA"/>
</dbReference>
<dbReference type="InterPro" id="IPR004515">
    <property type="entry name" value="Phosphoheptose_Isoase"/>
</dbReference>
<dbReference type="InterPro" id="IPR001347">
    <property type="entry name" value="SIS_dom"/>
</dbReference>
<dbReference type="InterPro" id="IPR046348">
    <property type="entry name" value="SIS_dom_sf"/>
</dbReference>
<dbReference type="InterPro" id="IPR050099">
    <property type="entry name" value="SIS_GmhA/DiaA_subfam"/>
</dbReference>
<dbReference type="NCBIfam" id="NF010546">
    <property type="entry name" value="PRK13936.1"/>
    <property type="match status" value="1"/>
</dbReference>
<dbReference type="PANTHER" id="PTHR30390:SF6">
    <property type="entry name" value="DNAA INITIATOR-ASSOCIATING PROTEIN DIAA"/>
    <property type="match status" value="1"/>
</dbReference>
<dbReference type="PANTHER" id="PTHR30390">
    <property type="entry name" value="SEDOHEPTULOSE 7-PHOSPHATE ISOMERASE / DNAA INITIATOR-ASSOCIATING FACTOR FOR REPLICATION INITIATION"/>
    <property type="match status" value="1"/>
</dbReference>
<dbReference type="Pfam" id="PF13580">
    <property type="entry name" value="SIS_2"/>
    <property type="match status" value="1"/>
</dbReference>
<dbReference type="SUPFAM" id="SSF53697">
    <property type="entry name" value="SIS domain"/>
    <property type="match status" value="1"/>
</dbReference>
<dbReference type="PROSITE" id="PS51464">
    <property type="entry name" value="SIS"/>
    <property type="match status" value="1"/>
</dbReference>
<organism>
    <name type="scientific">Methylococcus capsulatus (strain ATCC 33009 / NCIMB 11132 / Bath)</name>
    <dbReference type="NCBI Taxonomy" id="243233"/>
    <lineage>
        <taxon>Bacteria</taxon>
        <taxon>Pseudomonadati</taxon>
        <taxon>Pseudomonadota</taxon>
        <taxon>Gammaproteobacteria</taxon>
        <taxon>Methylococcales</taxon>
        <taxon>Methylococcaceae</taxon>
        <taxon>Methylococcus</taxon>
    </lineage>
</organism>
<reference key="1">
    <citation type="journal article" date="2004" name="PLoS Biol.">
        <title>Genomic insights into methanotrophy: the complete genome sequence of Methylococcus capsulatus (Bath).</title>
        <authorList>
            <person name="Ward N.L."/>
            <person name="Larsen O."/>
            <person name="Sakwa J."/>
            <person name="Bruseth L."/>
            <person name="Khouri H.M."/>
            <person name="Durkin A.S."/>
            <person name="Dimitrov G."/>
            <person name="Jiang L."/>
            <person name="Scanlan D."/>
            <person name="Kang K.H."/>
            <person name="Lewis M.R."/>
            <person name="Nelson K.E."/>
            <person name="Methe B.A."/>
            <person name="Wu M."/>
            <person name="Heidelberg J.F."/>
            <person name="Paulsen I.T."/>
            <person name="Fouts D.E."/>
            <person name="Ravel J."/>
            <person name="Tettelin H."/>
            <person name="Ren Q."/>
            <person name="Read T.D."/>
            <person name="DeBoy R.T."/>
            <person name="Seshadri R."/>
            <person name="Salzberg S.L."/>
            <person name="Jensen H.B."/>
            <person name="Birkeland N.K."/>
            <person name="Nelson W.C."/>
            <person name="Dodson R.J."/>
            <person name="Grindhaug S.H."/>
            <person name="Holt I.E."/>
            <person name="Eidhammer I."/>
            <person name="Jonasen I."/>
            <person name="Vanaken S."/>
            <person name="Utterback T.R."/>
            <person name="Feldblyum T.V."/>
            <person name="Fraser C.M."/>
            <person name="Lillehaug J.R."/>
            <person name="Eisen J.A."/>
        </authorList>
    </citation>
    <scope>NUCLEOTIDE SEQUENCE [LARGE SCALE GENOMIC DNA]</scope>
    <source>
        <strain>ATCC 33009 / NCIMB 11132 / Bath</strain>
    </source>
</reference>
<feature type="chain" id="PRO_1000009078" description="Phosphoheptose isomerase">
    <location>
        <begin position="1"/>
        <end position="195"/>
    </location>
</feature>
<feature type="domain" description="SIS" evidence="1">
    <location>
        <begin position="36"/>
        <end position="195"/>
    </location>
</feature>
<feature type="binding site" evidence="1">
    <location>
        <begin position="51"/>
        <end position="53"/>
    </location>
    <ligand>
        <name>substrate</name>
    </ligand>
</feature>
<feature type="binding site" evidence="1">
    <location>
        <position position="60"/>
    </location>
    <ligand>
        <name>Zn(2+)</name>
        <dbReference type="ChEBI" id="CHEBI:29105"/>
    </ligand>
</feature>
<feature type="binding site" evidence="1">
    <location>
        <position position="64"/>
    </location>
    <ligand>
        <name>substrate</name>
    </ligand>
</feature>
<feature type="binding site" evidence="1">
    <location>
        <position position="64"/>
    </location>
    <ligand>
        <name>Zn(2+)</name>
        <dbReference type="ChEBI" id="CHEBI:29105"/>
    </ligand>
</feature>
<feature type="binding site" evidence="1">
    <location>
        <begin position="93"/>
        <end position="94"/>
    </location>
    <ligand>
        <name>substrate</name>
    </ligand>
</feature>
<feature type="binding site" evidence="1">
    <location>
        <begin position="119"/>
        <end position="121"/>
    </location>
    <ligand>
        <name>substrate</name>
    </ligand>
</feature>
<feature type="binding site" evidence="1">
    <location>
        <position position="124"/>
    </location>
    <ligand>
        <name>substrate</name>
    </ligand>
</feature>
<feature type="binding site" evidence="1">
    <location>
        <position position="174"/>
    </location>
    <ligand>
        <name>substrate</name>
    </ligand>
</feature>
<feature type="binding site" evidence="1">
    <location>
        <position position="174"/>
    </location>
    <ligand>
        <name>Zn(2+)</name>
        <dbReference type="ChEBI" id="CHEBI:29105"/>
    </ligand>
</feature>
<feature type="binding site" evidence="1">
    <location>
        <position position="182"/>
    </location>
    <ligand>
        <name>Zn(2+)</name>
        <dbReference type="ChEBI" id="CHEBI:29105"/>
    </ligand>
</feature>
<proteinExistence type="inferred from homology"/>
<keyword id="KW-0119">Carbohydrate metabolism</keyword>
<keyword id="KW-0963">Cytoplasm</keyword>
<keyword id="KW-0413">Isomerase</keyword>
<keyword id="KW-0479">Metal-binding</keyword>
<keyword id="KW-1185">Reference proteome</keyword>
<keyword id="KW-0862">Zinc</keyword>
<comment type="function">
    <text evidence="1">Catalyzes the isomerization of sedoheptulose 7-phosphate in D-glycero-D-manno-heptose 7-phosphate.</text>
</comment>
<comment type="catalytic activity">
    <reaction evidence="1">
        <text>2 D-sedoheptulose 7-phosphate = D-glycero-alpha-D-manno-heptose 7-phosphate + D-glycero-beta-D-manno-heptose 7-phosphate</text>
        <dbReference type="Rhea" id="RHEA:27489"/>
        <dbReference type="ChEBI" id="CHEBI:57483"/>
        <dbReference type="ChEBI" id="CHEBI:60203"/>
        <dbReference type="ChEBI" id="CHEBI:60204"/>
        <dbReference type="EC" id="5.3.1.28"/>
    </reaction>
</comment>
<comment type="cofactor">
    <cofactor evidence="1">
        <name>Zn(2+)</name>
        <dbReference type="ChEBI" id="CHEBI:29105"/>
    </cofactor>
    <text evidence="1">Binds 1 zinc ion per subunit.</text>
</comment>
<comment type="pathway">
    <text evidence="1">Carbohydrate biosynthesis; D-glycero-D-manno-heptose 7-phosphate biosynthesis; D-glycero-alpha-D-manno-heptose 7-phosphate and D-glycero-beta-D-manno-heptose 7-phosphate from sedoheptulose 7-phosphate: step 1/1.</text>
</comment>
<comment type="subunit">
    <text evidence="1">Homotetramer.</text>
</comment>
<comment type="subcellular location">
    <subcellularLocation>
        <location evidence="1">Cytoplasm</location>
    </subcellularLocation>
</comment>
<comment type="miscellaneous">
    <text evidence="1">The reaction produces a racemic mixture of D-glycero-alpha-D-manno-heptose 7-phosphate and D-glycero-beta-D-manno-heptose 7-phosphate.</text>
</comment>
<comment type="similarity">
    <text evidence="1">Belongs to the SIS family. GmhA subfamily.</text>
</comment>
<sequence length="195" mass="20939">MNPHERIERHFSAHIEAAQEALTMLGDAIEIAAAKLAHCLLSDGKILCCGNGGSAAQAQHFSSEMLNRFERERPGLPAVALTTDTSTLTSIANDYHFDEVFAKQVRALGHAGDILVIYSTSGISPSVLSAAVAAQDRDMSIIALNGRDGGTLAPLLRDTDVEIRVTAPSTARIQEIHLLITHCLCDLVDHQLFGE</sequence>
<evidence type="ECO:0000255" key="1">
    <source>
        <dbReference type="HAMAP-Rule" id="MF_00067"/>
    </source>
</evidence>
<protein>
    <recommendedName>
        <fullName evidence="1">Phosphoheptose isomerase</fullName>
        <ecNumber evidence="1">5.3.1.28</ecNumber>
    </recommendedName>
    <alternativeName>
        <fullName evidence="1">Sedoheptulose 7-phosphate isomerase</fullName>
    </alternativeName>
</protein>
<gene>
    <name evidence="1" type="primary">gmhA</name>
    <name type="ordered locus">MCA0183</name>
</gene>